<reference key="1">
    <citation type="journal article" date="1987" name="Eur. J. Biochem.">
        <title>Structure and evolution of the repetitive gene encoding streptococcal protein G.</title>
        <authorList>
            <person name="Olsson A."/>
            <person name="Eliasson M."/>
            <person name="Guss B."/>
            <person name="Nilsson B."/>
            <person name="Hellman U."/>
            <person name="Lindberg M."/>
            <person name="Uhlen M."/>
        </authorList>
    </citation>
    <scope>NUCLEOTIDE SEQUENCE [GENOMIC DNA]</scope>
    <source>
        <strain>G148</strain>
    </source>
</reference>
<reference key="2">
    <citation type="journal article" date="1987" name="Nucleic Acids Res.">
        <title>Nucleotide sequence of the protein G gene from Streptococcus GX7805, and comparison to previously reported sequences.</title>
        <authorList>
            <person name="Filpula D."/>
            <person name="Alexander P."/>
            <person name="Fahnestock S.R."/>
        </authorList>
    </citation>
    <scope>NUCLEOTIDE SEQUENCE [GENOMIC DNA]</scope>
    <source>
        <strain>GX7805</strain>
    </source>
</reference>
<reference key="3">
    <citation type="journal article" date="1986" name="EMBO J.">
        <title>Structure of the IgG-binding regions of streptococcal protein G.</title>
        <authorList>
            <person name="Guss B."/>
            <person name="Eliasson M."/>
            <person name="Olsson A."/>
            <person name="Uhlen M."/>
            <person name="Frej A.-K."/>
            <person name="Joernvall H."/>
            <person name="Flock J.-I."/>
            <person name="Lindberg M."/>
        </authorList>
    </citation>
    <scope>NUCLEOTIDE SEQUENCE [GENOMIC DNA] OF 114-593</scope>
    <source>
        <strain>G148</strain>
    </source>
</reference>
<reference key="4">
    <citation type="journal article" date="1998" name="Nat. Struct. Biol.">
        <title>Design, structure and stability of a hyperthermophilic protein variant.</title>
        <authorList>
            <person name="Malakauskas S.M."/>
            <person name="Mayo S.L."/>
        </authorList>
    </citation>
    <scope>STRUCTURE BY NMR OF 371-427</scope>
    <source>
        <strain>G148</strain>
    </source>
</reference>
<evidence type="ECO:0000255" key="1">
    <source>
        <dbReference type="PROSITE-ProRule" id="PRU00477"/>
    </source>
</evidence>
<evidence type="ECO:0000256" key="2">
    <source>
        <dbReference type="SAM" id="MobiDB-lite"/>
    </source>
</evidence>
<evidence type="ECO:0007829" key="3">
    <source>
        <dbReference type="PDB" id="1FCL"/>
    </source>
</evidence>
<evidence type="ECO:0007829" key="4">
    <source>
        <dbReference type="PDB" id="1GJS"/>
    </source>
</evidence>
<evidence type="ECO:0007829" key="5">
    <source>
        <dbReference type="PDB" id="2I2Y"/>
    </source>
</evidence>
<evidence type="ECO:0007829" key="6">
    <source>
        <dbReference type="PDB" id="2ON8"/>
    </source>
</evidence>
<evidence type="ECO:0007829" key="7">
    <source>
        <dbReference type="PDB" id="3FIL"/>
    </source>
</evidence>
<evidence type="ECO:0007829" key="8">
    <source>
        <dbReference type="PDB" id="6OC7"/>
    </source>
</evidence>
<sequence length="593" mass="63292">MEKEKKVKYFLRKSAFGLASVSAAFLVGSTVFAVDSPIEDTPIIRNGGELTNLLGNSETTLALRNEESATADLTAAAVADTVAAAAAENAGAAAWEAAAAADALAKAKADALKEFNKYGVSDYYKNLINNAKTVEGVKDLQAQVVESAKKARISEATDGLSDFLKSQTPAEDTVKSIELAEAKVLANRELDKYGVSDYHKNLINNAKTVEGVKDLQAQVVESAKKARISEATDGLSDFLKSQTPAEDTVKSIELAEAKVLANRELDKYGVSDYYKNLINNAKTVEGVKALIDEILAALPKTDTYKLILNGKTLKGETTTEAVDAATAEKVFKQYANDNGVDGEWTYDDATKTFTVTEKPEVIDASELTPAVTTYKLVINGKTLKGETTTEAVDAATAEKVFKQYANDNGVDGEWTYDDATKTFTVTEKPEVIDASELTPAVTTYKLVINGKTLKGETTTKAVDAETAEKAFKQYANDNGVDGVWTYDDATKTFTVTEMVTEVPGDAPTEPEKPEASIPLVPLTPATPIAKDDAKKDDTKKEDAKKPEAKKEDAKKAETLPTTGEGSNPFFTAAALAVMAGAGALAVASKRKED</sequence>
<dbReference type="EMBL" id="X06173">
    <property type="protein sequence ID" value="CAA29540.1"/>
    <property type="molecule type" value="Genomic_DNA"/>
</dbReference>
<dbReference type="EMBL" id="Y00428">
    <property type="protein sequence ID" value="CAA68489.1"/>
    <property type="molecule type" value="Genomic_DNA"/>
</dbReference>
<dbReference type="EMBL" id="X04015">
    <property type="protein sequence ID" value="CAA27638.1"/>
    <property type="molecule type" value="Genomic_DNA"/>
</dbReference>
<dbReference type="PIR" id="S00128">
    <property type="entry name" value="S00128"/>
</dbReference>
<dbReference type="PDB" id="1FCC">
    <property type="method" value="X-ray"/>
    <property type="resolution" value="3.20 A"/>
    <property type="chains" value="C/D=372-427"/>
</dbReference>
<dbReference type="PDB" id="1FCL">
    <property type="method" value="NMR"/>
    <property type="chains" value="A=372-427"/>
</dbReference>
<dbReference type="PDB" id="1FD6">
    <property type="method" value="NMR"/>
    <property type="chains" value="A=372-427"/>
</dbReference>
<dbReference type="PDB" id="1GB4">
    <property type="method" value="NMR"/>
    <property type="chains" value="A=372-427"/>
</dbReference>
<dbReference type="PDB" id="1GJS">
    <property type="method" value="NMR"/>
    <property type="chains" value="A=254-299"/>
</dbReference>
<dbReference type="PDB" id="1GJT">
    <property type="method" value="NMR"/>
    <property type="chains" value="A=254-299"/>
</dbReference>
<dbReference type="PDB" id="1IBX">
    <property type="method" value="NMR"/>
    <property type="chains" value="B=-"/>
</dbReference>
<dbReference type="PDB" id="1P7E">
    <property type="method" value="NMR"/>
    <property type="chains" value="A=444-497"/>
</dbReference>
<dbReference type="PDB" id="1P7F">
    <property type="method" value="NMR"/>
    <property type="chains" value="A=444-497"/>
</dbReference>
<dbReference type="PDB" id="1QKZ">
    <property type="method" value="X-ray"/>
    <property type="resolution" value="1.95 A"/>
    <property type="chains" value="A=368-430"/>
</dbReference>
<dbReference type="PDB" id="1UWX">
    <property type="method" value="X-ray"/>
    <property type="resolution" value="2.20 A"/>
    <property type="chains" value="A/B=368-430"/>
</dbReference>
<dbReference type="PDB" id="1ZXH">
    <property type="method" value="NMR"/>
    <property type="chains" value="A=453-495"/>
</dbReference>
<dbReference type="PDB" id="2GI9">
    <property type="method" value="X-ray"/>
    <property type="resolution" value="1.14 A"/>
    <property type="chains" value="A=303-357"/>
</dbReference>
<dbReference type="PDB" id="2I2Y">
    <property type="method" value="NMR"/>
    <property type="chains" value="A=304-357"/>
</dbReference>
<dbReference type="PDB" id="2I38">
    <property type="method" value="NMR"/>
    <property type="chains" value="A=304-357"/>
</dbReference>
<dbReference type="PDB" id="2IGG">
    <property type="method" value="NMR"/>
    <property type="chains" value="A=367-430"/>
</dbReference>
<dbReference type="PDB" id="2JSV">
    <property type="method" value="NMR"/>
    <property type="chains" value="X=303-357"/>
</dbReference>
<dbReference type="PDB" id="2JU6">
    <property type="method" value="NMR"/>
    <property type="chains" value="X=304-357"/>
</dbReference>
<dbReference type="PDB" id="2KHU">
    <property type="method" value="NMR"/>
    <property type="chains" value="A=304-357"/>
</dbReference>
<dbReference type="PDB" id="2KHW">
    <property type="method" value="NMR"/>
    <property type="chains" value="A=304-357"/>
</dbReference>
<dbReference type="PDB" id="2KN4">
    <property type="method" value="NMR"/>
    <property type="chains" value="A=304-357"/>
</dbReference>
<dbReference type="PDB" id="2KQ4">
    <property type="method" value="NMR"/>
    <property type="chains" value="X=303-357"/>
</dbReference>
<dbReference type="PDB" id="2KWD">
    <property type="method" value="NMR"/>
    <property type="chains" value="A/B/C/D/E=304-357"/>
</dbReference>
<dbReference type="PDB" id="2LUM">
    <property type="method" value="NMR"/>
    <property type="chains" value="A=444-497"/>
</dbReference>
<dbReference type="PDB" id="2N9K">
    <property type="method" value="NMR"/>
    <property type="chains" value="A=303-357"/>
</dbReference>
<dbReference type="PDB" id="2N9L">
    <property type="method" value="NMR"/>
    <property type="chains" value="A=303-357"/>
</dbReference>
<dbReference type="PDB" id="2OED">
    <property type="method" value="NMR"/>
    <property type="chains" value="A=444-497"/>
</dbReference>
<dbReference type="PDB" id="2ON8">
    <property type="method" value="X-ray"/>
    <property type="resolution" value="1.35 A"/>
    <property type="chains" value="A=373-427"/>
</dbReference>
<dbReference type="PDB" id="2ONQ">
    <property type="method" value="X-ray"/>
    <property type="resolution" value="1.70 A"/>
    <property type="chains" value="A=375-427"/>
</dbReference>
<dbReference type="PDB" id="2QMT">
    <property type="method" value="X-ray"/>
    <property type="resolution" value="1.05 A"/>
    <property type="chains" value="A=303-357"/>
</dbReference>
<dbReference type="PDB" id="3FIL">
    <property type="method" value="X-ray"/>
    <property type="resolution" value="0.88 A"/>
    <property type="chains" value="A/B=303-357"/>
</dbReference>
<dbReference type="PDB" id="3UI3">
    <property type="method" value="X-ray"/>
    <property type="resolution" value="2.80 A"/>
    <property type="chains" value="A/B=304-357"/>
</dbReference>
<dbReference type="PDB" id="3V3X">
    <property type="method" value="X-ray"/>
    <property type="resolution" value="2.00 A"/>
    <property type="chains" value="A/B/C/D=304-357"/>
</dbReference>
<dbReference type="PDB" id="4OZA">
    <property type="method" value="X-ray"/>
    <property type="resolution" value="2.20 A"/>
    <property type="chains" value="A=302-357"/>
</dbReference>
<dbReference type="PDB" id="4OZB">
    <property type="method" value="X-ray"/>
    <property type="resolution" value="1.80 A"/>
    <property type="chains" value="A/B=302-357"/>
</dbReference>
<dbReference type="PDB" id="4OZC">
    <property type="method" value="X-ray"/>
    <property type="resolution" value="2.30 A"/>
    <property type="chains" value="A=302-357"/>
</dbReference>
<dbReference type="PDB" id="4WH4">
    <property type="method" value="X-ray"/>
    <property type="resolution" value="2.20 A"/>
    <property type="chains" value="A/B=304-357"/>
</dbReference>
<dbReference type="PDB" id="5BMG">
    <property type="method" value="X-ray"/>
    <property type="resolution" value="2.20 A"/>
    <property type="chains" value="A/B/C/D/E/F/G/H=304-357"/>
</dbReference>
<dbReference type="PDB" id="5BMH">
    <property type="method" value="X-ray"/>
    <property type="resolution" value="1.60 A"/>
    <property type="chains" value="A=304-357"/>
</dbReference>
<dbReference type="PDB" id="5BMI">
    <property type="method" value="X-ray"/>
    <property type="resolution" value="2.50 A"/>
    <property type="chains" value="A=304-357"/>
</dbReference>
<dbReference type="PDB" id="5HFY">
    <property type="method" value="X-ray"/>
    <property type="resolution" value="1.95 A"/>
    <property type="chains" value="A/B=302-357"/>
</dbReference>
<dbReference type="PDB" id="5HG2">
    <property type="method" value="X-ray"/>
    <property type="resolution" value="1.80 A"/>
    <property type="chains" value="A/B/C/D=302-357"/>
</dbReference>
<dbReference type="PDB" id="5HI1">
    <property type="method" value="X-ray"/>
    <property type="resolution" value="2.15 A"/>
    <property type="chains" value="A/B/C/D/E/F/G/H=302-357"/>
</dbReference>
<dbReference type="PDB" id="5LDE">
    <property type="method" value="X-ray"/>
    <property type="resolution" value="3.38 A"/>
    <property type="chains" value="A/B=304-356"/>
</dbReference>
<dbReference type="PDB" id="5UB0">
    <property type="method" value="NMR"/>
    <property type="chains" value="A=373-427"/>
</dbReference>
<dbReference type="PDB" id="5UBS">
    <property type="method" value="NMR"/>
    <property type="chains" value="A=373-427"/>
</dbReference>
<dbReference type="PDB" id="5UCE">
    <property type="method" value="NMR"/>
    <property type="chains" value="A=373-427"/>
</dbReference>
<dbReference type="PDB" id="5UCF">
    <property type="method" value="NMR"/>
    <property type="chains" value="A=373-427"/>
</dbReference>
<dbReference type="PDB" id="6C9O">
    <property type="method" value="X-ray"/>
    <property type="resolution" value="1.20 A"/>
    <property type="chains" value="A/B=304-357"/>
</dbReference>
<dbReference type="PDB" id="6CHE">
    <property type="method" value="X-ray"/>
    <property type="resolution" value="1.10 A"/>
    <property type="chains" value="A=304-357"/>
</dbReference>
<dbReference type="PDB" id="6CPZ">
    <property type="method" value="X-ray"/>
    <property type="resolution" value="1.12 A"/>
    <property type="chains" value="A/B=304-357"/>
</dbReference>
<dbReference type="PDB" id="6CTE">
    <property type="method" value="X-ray"/>
    <property type="resolution" value="1.20 A"/>
    <property type="chains" value="A/B=304-357"/>
</dbReference>
<dbReference type="PDB" id="6HKA">
    <property type="method" value="NMR"/>
    <property type="chains" value="A=304-357"/>
</dbReference>
<dbReference type="PDB" id="6HPJ">
    <property type="method" value="NMR"/>
    <property type="chains" value="B=304-357"/>
</dbReference>
<dbReference type="PDB" id="6KMC">
    <property type="method" value="X-ray"/>
    <property type="resolution" value="1.84 A"/>
    <property type="chains" value="A/B=302-357"/>
</dbReference>
<dbReference type="PDB" id="6NJF">
    <property type="method" value="NMR"/>
    <property type="chains" value="A=373-427"/>
</dbReference>
<dbReference type="PDB" id="6NL6">
    <property type="method" value="X-ray"/>
    <property type="resolution" value="1.40 A"/>
    <property type="chains" value="A/B/C/D=303-357"/>
</dbReference>
<dbReference type="PDB" id="6NL7">
    <property type="method" value="X-ray"/>
    <property type="resolution" value="1.40 A"/>
    <property type="chains" value="A/B/C/D=303-357"/>
</dbReference>
<dbReference type="PDB" id="6NL8">
    <property type="method" value="X-ray"/>
    <property type="resolution" value="1.50 A"/>
    <property type="chains" value="A=303-357"/>
</dbReference>
<dbReference type="PDB" id="6NL9">
    <property type="method" value="X-ray"/>
    <property type="resolution" value="1.70 A"/>
    <property type="chains" value="A/B/C/D=303-357"/>
</dbReference>
<dbReference type="PDB" id="6NLA">
    <property type="method" value="X-ray"/>
    <property type="resolution" value="1.34 A"/>
    <property type="chains" value="A=303-357"/>
</dbReference>
<dbReference type="PDB" id="6NLB">
    <property type="method" value="X-ray"/>
    <property type="resolution" value="2.30 A"/>
    <property type="chains" value="A/B/C/D=303-357"/>
</dbReference>
<dbReference type="PDB" id="6O41">
    <property type="method" value="X-ray"/>
    <property type="resolution" value="2.46 A"/>
    <property type="chains" value="M/N/O=437-497"/>
</dbReference>
<dbReference type="PDB" id="6OC7">
    <property type="method" value="X-ray"/>
    <property type="resolution" value="1.30 A"/>
    <property type="chains" value="C=438-497"/>
</dbReference>
<dbReference type="PDB" id="6U8C">
    <property type="method" value="X-ray"/>
    <property type="resolution" value="2.61 A"/>
    <property type="chains" value="A/B=368-430"/>
</dbReference>
<dbReference type="PDB" id="6UUH">
    <property type="method" value="X-ray"/>
    <property type="resolution" value="2.70 A"/>
    <property type="chains" value="E/F=437-497"/>
</dbReference>
<dbReference type="PDB" id="6UYG">
    <property type="method" value="X-ray"/>
    <property type="resolution" value="3.38 A"/>
    <property type="chains" value="G=437-497"/>
</dbReference>
<dbReference type="PDB" id="6W00">
    <property type="method" value="X-ray"/>
    <property type="resolution" value="1.85 A"/>
    <property type="chains" value="G=440-497"/>
</dbReference>
<dbReference type="PDB" id="6WFW">
    <property type="method" value="X-ray"/>
    <property type="resolution" value="2.09 A"/>
    <property type="chains" value="G=439-497"/>
</dbReference>
<dbReference type="PDB" id="7DA8">
    <property type="method" value="X-ray"/>
    <property type="resolution" value="2.40 A"/>
    <property type="chains" value="A=303-357"/>
</dbReference>
<dbReference type="PDB" id="8DIJ">
    <property type="method" value="NMR"/>
    <property type="chains" value="A=302-357"/>
</dbReference>
<dbReference type="PDB" id="8TFR">
    <property type="method" value="X-ray"/>
    <property type="resolution" value="2.99 A"/>
    <property type="chains" value="C=437-497"/>
</dbReference>
<dbReference type="PDB" id="8UM7">
    <property type="method" value="NMR"/>
    <property type="chains" value="A=304-357"/>
</dbReference>
<dbReference type="PDB" id="8UM9">
    <property type="method" value="NMR"/>
    <property type="chains" value="A=304-357"/>
</dbReference>
<dbReference type="PDB" id="8UMA">
    <property type="method" value="NMR"/>
    <property type="chains" value="A=304-357"/>
</dbReference>
<dbReference type="PDB" id="8UMB">
    <property type="method" value="NMR"/>
    <property type="chains" value="A=304-357"/>
</dbReference>
<dbReference type="PDB" id="8UMS">
    <property type="method" value="NMR"/>
    <property type="chains" value="A=304-357"/>
</dbReference>
<dbReference type="PDB" id="8WCJ">
    <property type="method" value="X-ray"/>
    <property type="resolution" value="1.55 A"/>
    <property type="chains" value="A=444-497"/>
</dbReference>
<dbReference type="PDB" id="9AVO">
    <property type="method" value="X-ray"/>
    <property type="resolution" value="3.00 A"/>
    <property type="chains" value="C=368-430"/>
</dbReference>
<dbReference type="PDB" id="9AWE">
    <property type="method" value="X-ray"/>
    <property type="resolution" value="2.80 A"/>
    <property type="chains" value="C=368-430"/>
</dbReference>
<dbReference type="PDB" id="9FA8">
    <property type="method" value="NMR"/>
    <property type="chains" value="A=372-427"/>
</dbReference>
<dbReference type="PDBsum" id="1FCC"/>
<dbReference type="PDBsum" id="1FCL"/>
<dbReference type="PDBsum" id="1FD6"/>
<dbReference type="PDBsum" id="1GB4"/>
<dbReference type="PDBsum" id="1GJS"/>
<dbReference type="PDBsum" id="1GJT"/>
<dbReference type="PDBsum" id="1IBX"/>
<dbReference type="PDBsum" id="1P7E"/>
<dbReference type="PDBsum" id="1P7F"/>
<dbReference type="PDBsum" id="1QKZ"/>
<dbReference type="PDBsum" id="1UWX"/>
<dbReference type="PDBsum" id="1ZXH"/>
<dbReference type="PDBsum" id="2GI9"/>
<dbReference type="PDBsum" id="2I2Y"/>
<dbReference type="PDBsum" id="2I38"/>
<dbReference type="PDBsum" id="2IGG"/>
<dbReference type="PDBsum" id="2JSV"/>
<dbReference type="PDBsum" id="2JU6"/>
<dbReference type="PDBsum" id="2KHU"/>
<dbReference type="PDBsum" id="2KHW"/>
<dbReference type="PDBsum" id="2KN4"/>
<dbReference type="PDBsum" id="2KQ4"/>
<dbReference type="PDBsum" id="2KWD"/>
<dbReference type="PDBsum" id="2LUM"/>
<dbReference type="PDBsum" id="2N9K"/>
<dbReference type="PDBsum" id="2N9L"/>
<dbReference type="PDBsum" id="2OED"/>
<dbReference type="PDBsum" id="2ON8"/>
<dbReference type="PDBsum" id="2ONQ"/>
<dbReference type="PDBsum" id="2QMT"/>
<dbReference type="PDBsum" id="3FIL"/>
<dbReference type="PDBsum" id="3UI3"/>
<dbReference type="PDBsum" id="3V3X"/>
<dbReference type="PDBsum" id="4OZA"/>
<dbReference type="PDBsum" id="4OZB"/>
<dbReference type="PDBsum" id="4OZC"/>
<dbReference type="PDBsum" id="4WH4"/>
<dbReference type="PDBsum" id="5BMG"/>
<dbReference type="PDBsum" id="5BMH"/>
<dbReference type="PDBsum" id="5BMI"/>
<dbReference type="PDBsum" id="5HFY"/>
<dbReference type="PDBsum" id="5HG2"/>
<dbReference type="PDBsum" id="5HI1"/>
<dbReference type="PDBsum" id="5LDE"/>
<dbReference type="PDBsum" id="5UB0"/>
<dbReference type="PDBsum" id="5UBS"/>
<dbReference type="PDBsum" id="5UCE"/>
<dbReference type="PDBsum" id="5UCF"/>
<dbReference type="PDBsum" id="6C9O"/>
<dbReference type="PDBsum" id="6CHE"/>
<dbReference type="PDBsum" id="6CPZ"/>
<dbReference type="PDBsum" id="6CTE"/>
<dbReference type="PDBsum" id="6HKA"/>
<dbReference type="PDBsum" id="6HPJ"/>
<dbReference type="PDBsum" id="6KMC"/>
<dbReference type="PDBsum" id="6NJF"/>
<dbReference type="PDBsum" id="6NL6"/>
<dbReference type="PDBsum" id="6NL7"/>
<dbReference type="PDBsum" id="6NL8"/>
<dbReference type="PDBsum" id="6NL9"/>
<dbReference type="PDBsum" id="6NLA"/>
<dbReference type="PDBsum" id="6NLB"/>
<dbReference type="PDBsum" id="6O41"/>
<dbReference type="PDBsum" id="6OC7"/>
<dbReference type="PDBsum" id="6U8C"/>
<dbReference type="PDBsum" id="6UUH"/>
<dbReference type="PDBsum" id="6UYG"/>
<dbReference type="PDBsum" id="6W00"/>
<dbReference type="PDBsum" id="6WFW"/>
<dbReference type="PDBsum" id="7DA8"/>
<dbReference type="PDBsum" id="8DIJ"/>
<dbReference type="PDBsum" id="8TFR"/>
<dbReference type="PDBsum" id="8UM7"/>
<dbReference type="PDBsum" id="8UM9"/>
<dbReference type="PDBsum" id="8UMA"/>
<dbReference type="PDBsum" id="8UMB"/>
<dbReference type="PDBsum" id="8UMS"/>
<dbReference type="PDBsum" id="8WCJ"/>
<dbReference type="PDBsum" id="9AVO"/>
<dbReference type="PDBsum" id="9AWE"/>
<dbReference type="PDBsum" id="9FA8"/>
<dbReference type="BMRB" id="P19909"/>
<dbReference type="EMDB" id="EMD-44450"/>
<dbReference type="SMR" id="P19909"/>
<dbReference type="MINT" id="P19909"/>
<dbReference type="DrugBank" id="DB04464">
    <property type="generic name" value="N-Formylmethionine"/>
</dbReference>
<dbReference type="EvolutionaryTrace" id="P19909"/>
<dbReference type="GO" id="GO:0005576">
    <property type="term" value="C:extracellular region"/>
    <property type="evidence" value="ECO:0007669"/>
    <property type="project" value="UniProtKB-KW"/>
</dbReference>
<dbReference type="GO" id="GO:0019864">
    <property type="term" value="F:IgG binding"/>
    <property type="evidence" value="ECO:0007669"/>
    <property type="project" value="UniProtKB-KW"/>
</dbReference>
<dbReference type="Gene3D" id="3.10.20.10">
    <property type="match status" value="3"/>
</dbReference>
<dbReference type="Gene3D" id="1.10.8.40">
    <property type="entry name" value="Albumin-binding domain"/>
    <property type="match status" value="3"/>
</dbReference>
<dbReference type="InterPro" id="IPR035152">
    <property type="entry name" value="GA-like"/>
</dbReference>
<dbReference type="InterPro" id="IPR009063">
    <property type="entry name" value="Ig/albumin-bd_sf"/>
</dbReference>
<dbReference type="InterPro" id="IPR000724">
    <property type="entry name" value="IgG-bd_B"/>
</dbReference>
<dbReference type="InterPro" id="IPR019931">
    <property type="entry name" value="LPXTG_anchor"/>
</dbReference>
<dbReference type="InterPro" id="IPR019950">
    <property type="entry name" value="M_anchor"/>
</dbReference>
<dbReference type="InterPro" id="IPR005877">
    <property type="entry name" value="YSIRK_signal_dom"/>
</dbReference>
<dbReference type="NCBIfam" id="TIGR01167">
    <property type="entry name" value="LPXTG_anchor"/>
    <property type="match status" value="1"/>
</dbReference>
<dbReference type="NCBIfam" id="TIGR01168">
    <property type="entry name" value="YSIRK_signal"/>
    <property type="match status" value="1"/>
</dbReference>
<dbReference type="Pfam" id="PF17573">
    <property type="entry name" value="GA-like"/>
    <property type="match status" value="3"/>
</dbReference>
<dbReference type="Pfam" id="PF00746">
    <property type="entry name" value="Gram_pos_anchor"/>
    <property type="match status" value="1"/>
</dbReference>
<dbReference type="Pfam" id="PF01378">
    <property type="entry name" value="IgG_binding_B"/>
    <property type="match status" value="3"/>
</dbReference>
<dbReference type="PRINTS" id="PR00015">
    <property type="entry name" value="GPOSANCHOR"/>
</dbReference>
<dbReference type="SUPFAM" id="SSF46997">
    <property type="entry name" value="Bacterial immunoglobulin/albumin-binding domains"/>
    <property type="match status" value="3"/>
</dbReference>
<dbReference type="SUPFAM" id="SSF54358">
    <property type="entry name" value="Immunoglobulin-binding domains"/>
    <property type="match status" value="3"/>
</dbReference>
<dbReference type="PROSITE" id="PS50847">
    <property type="entry name" value="GRAM_POS_ANCHORING"/>
    <property type="match status" value="1"/>
</dbReference>
<organism>
    <name type="scientific">Streptococcus sp. group G</name>
    <dbReference type="NCBI Taxonomy" id="1320"/>
    <lineage>
        <taxon>Bacteria</taxon>
        <taxon>Bacillati</taxon>
        <taxon>Bacillota</taxon>
        <taxon>Bacilli</taxon>
        <taxon>Lactobacillales</taxon>
        <taxon>Streptococcaceae</taxon>
        <taxon>Streptococcus</taxon>
    </lineage>
</organism>
<name>SPG2_STRSG</name>
<accession>P19909</accession>
<proteinExistence type="evidence at protein level"/>
<comment type="subcellular location">
    <subcellularLocation>
        <location evidence="1">Secreted</location>
        <location evidence="1">Cell wall</location>
        <topology evidence="1">Peptidoglycan-anchor</topology>
    </subcellularLocation>
</comment>
<protein>
    <recommendedName>
        <fullName>Immunoglobulin G-binding protein G</fullName>
        <shortName>IgG-binding protein G</shortName>
    </recommendedName>
</protein>
<feature type="signal peptide">
    <location>
        <begin position="1"/>
        <end position="33"/>
    </location>
</feature>
<feature type="chain" id="PRO_0000005659" description="Immunoglobulin G-binding protein G">
    <location>
        <begin position="34"/>
        <end position="562"/>
    </location>
</feature>
<feature type="propeptide" id="PRO_0000005660" description="Removed by sortase" evidence="1">
    <location>
        <begin position="563"/>
        <end position="593"/>
    </location>
</feature>
<feature type="repeat" description="1-1">
    <location>
        <begin position="104"/>
        <end position="140"/>
    </location>
</feature>
<feature type="repeat" description="1-2">
    <location>
        <begin position="179"/>
        <end position="215"/>
    </location>
</feature>
<feature type="repeat" description="1-3">
    <location>
        <begin position="254"/>
        <end position="290"/>
    </location>
</feature>
<feature type="repeat" description="2-1">
    <location>
        <begin position="303"/>
        <end position="357"/>
    </location>
</feature>
<feature type="repeat" description="2-2">
    <location>
        <begin position="373"/>
        <end position="427"/>
    </location>
</feature>
<feature type="region of interest" description="3 X 37 AA repeats">
    <location>
        <begin position="104"/>
        <end position="290"/>
    </location>
</feature>
<feature type="region of interest" description="2 X 55 AA repeats">
    <location>
        <begin position="303"/>
        <end position="427"/>
    </location>
</feature>
<feature type="region of interest" description="Disordered" evidence="2">
    <location>
        <begin position="503"/>
        <end position="567"/>
    </location>
</feature>
<feature type="region of interest" description="5 X 5 AA repeats of [DE]-D-A-K-K">
    <location>
        <begin position="531"/>
        <end position="555"/>
    </location>
</feature>
<feature type="short sequence motif" description="LPXTG sorting signal" evidence="1">
    <location>
        <begin position="559"/>
        <end position="563"/>
    </location>
</feature>
<feature type="compositionally biased region" description="Basic and acidic residues" evidence="2">
    <location>
        <begin position="529"/>
        <end position="557"/>
    </location>
</feature>
<feature type="modified residue" description="Pentaglycyl murein peptidoglycan amidated threonine" evidence="1">
    <location>
        <position position="562"/>
    </location>
</feature>
<feature type="helix" evidence="4">
    <location>
        <begin position="251"/>
        <end position="268"/>
    </location>
</feature>
<feature type="helix" evidence="4">
    <location>
        <begin position="272"/>
        <end position="279"/>
    </location>
</feature>
<feature type="helix" evidence="4">
    <location>
        <begin position="284"/>
        <end position="296"/>
    </location>
</feature>
<feature type="strand" evidence="7">
    <location>
        <begin position="303"/>
        <end position="309"/>
    </location>
</feature>
<feature type="strand" evidence="5">
    <location>
        <begin position="311"/>
        <end position="313"/>
    </location>
</feature>
<feature type="strand" evidence="7">
    <location>
        <begin position="314"/>
        <end position="320"/>
    </location>
</feature>
<feature type="strand" evidence="3">
    <location>
        <begin position="321"/>
        <end position="323"/>
    </location>
</feature>
<feature type="helix" evidence="7">
    <location>
        <begin position="324"/>
        <end position="337"/>
    </location>
</feature>
<feature type="strand" evidence="7">
    <location>
        <begin position="343"/>
        <end position="347"/>
    </location>
</feature>
<feature type="helix" evidence="7">
    <location>
        <begin position="348"/>
        <end position="350"/>
    </location>
</feature>
<feature type="strand" evidence="7">
    <location>
        <begin position="352"/>
        <end position="356"/>
    </location>
</feature>
<feature type="strand" evidence="6">
    <location>
        <begin position="373"/>
        <end position="379"/>
    </location>
</feature>
<feature type="strand" evidence="6">
    <location>
        <begin position="384"/>
        <end position="390"/>
    </location>
</feature>
<feature type="helix" evidence="6">
    <location>
        <begin position="394"/>
        <end position="407"/>
    </location>
</feature>
<feature type="strand" evidence="6">
    <location>
        <begin position="413"/>
        <end position="417"/>
    </location>
</feature>
<feature type="turn" evidence="6">
    <location>
        <begin position="418"/>
        <end position="421"/>
    </location>
</feature>
<feature type="strand" evidence="6">
    <location>
        <begin position="422"/>
        <end position="426"/>
    </location>
</feature>
<feature type="strand" evidence="8">
    <location>
        <begin position="442"/>
        <end position="449"/>
    </location>
</feature>
<feature type="strand" evidence="8">
    <location>
        <begin position="451"/>
        <end position="463"/>
    </location>
</feature>
<feature type="helix" evidence="8">
    <location>
        <begin position="464"/>
        <end position="477"/>
    </location>
</feature>
<feature type="strand" evidence="8">
    <location>
        <begin position="483"/>
        <end position="487"/>
    </location>
</feature>
<feature type="turn" evidence="8">
    <location>
        <begin position="488"/>
        <end position="491"/>
    </location>
</feature>
<feature type="strand" evidence="8">
    <location>
        <begin position="492"/>
        <end position="496"/>
    </location>
</feature>
<gene>
    <name type="primary">spg</name>
</gene>
<keyword id="KW-0002">3D-structure</keyword>
<keyword id="KW-0134">Cell wall</keyword>
<keyword id="KW-0390">IgG-binding protein</keyword>
<keyword id="KW-0572">Peptidoglycan-anchor</keyword>
<keyword id="KW-0677">Repeat</keyword>
<keyword id="KW-0964">Secreted</keyword>
<keyword id="KW-0732">Signal</keyword>